<accession>O31788</accession>
<protein>
    <recommendedName>
        <fullName>Serine protease AprX</fullName>
        <ecNumber>3.4.21.-</ecNumber>
    </recommendedName>
</protein>
<keyword id="KW-0963">Cytoplasm</keyword>
<keyword id="KW-0378">Hydrolase</keyword>
<keyword id="KW-0645">Protease</keyword>
<keyword id="KW-1185">Reference proteome</keyword>
<keyword id="KW-0720">Serine protease</keyword>
<reference key="1">
    <citation type="journal article" date="1997" name="Nature">
        <title>The complete genome sequence of the Gram-positive bacterium Bacillus subtilis.</title>
        <authorList>
            <person name="Kunst F."/>
            <person name="Ogasawara N."/>
            <person name="Moszer I."/>
            <person name="Albertini A.M."/>
            <person name="Alloni G."/>
            <person name="Azevedo V."/>
            <person name="Bertero M.G."/>
            <person name="Bessieres P."/>
            <person name="Bolotin A."/>
            <person name="Borchert S."/>
            <person name="Borriss R."/>
            <person name="Boursier L."/>
            <person name="Brans A."/>
            <person name="Braun M."/>
            <person name="Brignell S.C."/>
            <person name="Bron S."/>
            <person name="Brouillet S."/>
            <person name="Bruschi C.V."/>
            <person name="Caldwell B."/>
            <person name="Capuano V."/>
            <person name="Carter N.M."/>
            <person name="Choi S.-K."/>
            <person name="Codani J.-J."/>
            <person name="Connerton I.F."/>
            <person name="Cummings N.J."/>
            <person name="Daniel R.A."/>
            <person name="Denizot F."/>
            <person name="Devine K.M."/>
            <person name="Duesterhoeft A."/>
            <person name="Ehrlich S.D."/>
            <person name="Emmerson P.T."/>
            <person name="Entian K.-D."/>
            <person name="Errington J."/>
            <person name="Fabret C."/>
            <person name="Ferrari E."/>
            <person name="Foulger D."/>
            <person name="Fritz C."/>
            <person name="Fujita M."/>
            <person name="Fujita Y."/>
            <person name="Fuma S."/>
            <person name="Galizzi A."/>
            <person name="Galleron N."/>
            <person name="Ghim S.-Y."/>
            <person name="Glaser P."/>
            <person name="Goffeau A."/>
            <person name="Golightly E.J."/>
            <person name="Grandi G."/>
            <person name="Guiseppi G."/>
            <person name="Guy B.J."/>
            <person name="Haga K."/>
            <person name="Haiech J."/>
            <person name="Harwood C.R."/>
            <person name="Henaut A."/>
            <person name="Hilbert H."/>
            <person name="Holsappel S."/>
            <person name="Hosono S."/>
            <person name="Hullo M.-F."/>
            <person name="Itaya M."/>
            <person name="Jones L.-M."/>
            <person name="Joris B."/>
            <person name="Karamata D."/>
            <person name="Kasahara Y."/>
            <person name="Klaerr-Blanchard M."/>
            <person name="Klein C."/>
            <person name="Kobayashi Y."/>
            <person name="Koetter P."/>
            <person name="Koningstein G."/>
            <person name="Krogh S."/>
            <person name="Kumano M."/>
            <person name="Kurita K."/>
            <person name="Lapidus A."/>
            <person name="Lardinois S."/>
            <person name="Lauber J."/>
            <person name="Lazarevic V."/>
            <person name="Lee S.-M."/>
            <person name="Levine A."/>
            <person name="Liu H."/>
            <person name="Masuda S."/>
            <person name="Mauel C."/>
            <person name="Medigue C."/>
            <person name="Medina N."/>
            <person name="Mellado R.P."/>
            <person name="Mizuno M."/>
            <person name="Moestl D."/>
            <person name="Nakai S."/>
            <person name="Noback M."/>
            <person name="Noone D."/>
            <person name="O'Reilly M."/>
            <person name="Ogawa K."/>
            <person name="Ogiwara A."/>
            <person name="Oudega B."/>
            <person name="Park S.-H."/>
            <person name="Parro V."/>
            <person name="Pohl T.M."/>
            <person name="Portetelle D."/>
            <person name="Porwollik S."/>
            <person name="Prescott A.M."/>
            <person name="Presecan E."/>
            <person name="Pujic P."/>
            <person name="Purnelle B."/>
            <person name="Rapoport G."/>
            <person name="Rey M."/>
            <person name="Reynolds S."/>
            <person name="Rieger M."/>
            <person name="Rivolta C."/>
            <person name="Rocha E."/>
            <person name="Roche B."/>
            <person name="Rose M."/>
            <person name="Sadaie Y."/>
            <person name="Sato T."/>
            <person name="Scanlan E."/>
            <person name="Schleich S."/>
            <person name="Schroeter R."/>
            <person name="Scoffone F."/>
            <person name="Sekiguchi J."/>
            <person name="Sekowska A."/>
            <person name="Seror S.J."/>
            <person name="Serror P."/>
            <person name="Shin B.-S."/>
            <person name="Soldo B."/>
            <person name="Sorokin A."/>
            <person name="Tacconi E."/>
            <person name="Takagi T."/>
            <person name="Takahashi H."/>
            <person name="Takemaru K."/>
            <person name="Takeuchi M."/>
            <person name="Tamakoshi A."/>
            <person name="Tanaka T."/>
            <person name="Terpstra P."/>
            <person name="Tognoni A."/>
            <person name="Tosato V."/>
            <person name="Uchiyama S."/>
            <person name="Vandenbol M."/>
            <person name="Vannier F."/>
            <person name="Vassarotti A."/>
            <person name="Viari A."/>
            <person name="Wambutt R."/>
            <person name="Wedler E."/>
            <person name="Wedler H."/>
            <person name="Weitzenegger T."/>
            <person name="Winters P."/>
            <person name="Wipat A."/>
            <person name="Yamamoto H."/>
            <person name="Yamane K."/>
            <person name="Yasumoto K."/>
            <person name="Yata K."/>
            <person name="Yoshida K."/>
            <person name="Yoshikawa H.-F."/>
            <person name="Zumstein E."/>
            <person name="Yoshikawa H."/>
            <person name="Danchin A."/>
        </authorList>
    </citation>
    <scope>NUCLEOTIDE SEQUENCE [LARGE SCALE GENOMIC DNA]</scope>
    <source>
        <strain>168</strain>
    </source>
</reference>
<reference key="2">
    <citation type="journal article" date="1999" name="Microbiology">
        <title>A novel member of the subtilisin-like protease family from Bacillus subtilis.</title>
        <authorList>
            <person name="Valbuzzi A."/>
            <person name="Ferrari E."/>
            <person name="Albertini A.M."/>
        </authorList>
    </citation>
    <scope>INDUCTION</scope>
    <scope>DISRUPTION PHENOTYPE</scope>
    <source>
        <strain>168</strain>
    </source>
</reference>
<reference key="3">
    <citation type="journal article" date="2007" name="J. Biosci. Bioeng.">
        <title>Bacillus subtilis AprX involved in degradation of a heterologous protein during the late stationary growth phase.</title>
        <authorList>
            <person name="Kodama T."/>
            <person name="Endo K."/>
            <person name="Sawada K."/>
            <person name="Ara K."/>
            <person name="Ozaki K."/>
            <person name="Kakeshita H."/>
            <person name="Yamane K."/>
            <person name="Sekiguchi J."/>
        </authorList>
    </citation>
    <scope>FUNCTION AS A PROTEASE</scope>
    <scope>ACTIVITY REGULATION</scope>
    <scope>INDUCTION</scope>
    <scope>SUBCELLULAR LOCATION</scope>
    <source>
        <strain>168</strain>
    </source>
</reference>
<evidence type="ECO:0000255" key="1">
    <source>
        <dbReference type="PROSITE-ProRule" id="PRU01240"/>
    </source>
</evidence>
<evidence type="ECO:0000256" key="2">
    <source>
        <dbReference type="SAM" id="MobiDB-lite"/>
    </source>
</evidence>
<evidence type="ECO:0000269" key="3">
    <source>
    </source>
</evidence>
<evidence type="ECO:0000269" key="4">
    <source>
    </source>
</evidence>
<evidence type="ECO:0000305" key="5"/>
<evidence type="ECO:0000305" key="6">
    <source>
    </source>
</evidence>
<organism>
    <name type="scientific">Bacillus subtilis (strain 168)</name>
    <dbReference type="NCBI Taxonomy" id="224308"/>
    <lineage>
        <taxon>Bacteria</taxon>
        <taxon>Bacillati</taxon>
        <taxon>Bacillota</taxon>
        <taxon>Bacilli</taxon>
        <taxon>Bacillales</taxon>
        <taxon>Bacillaceae</taxon>
        <taxon>Bacillus</taxon>
    </lineage>
</organism>
<name>APRX_BACSU</name>
<proteinExistence type="evidence at protein level"/>
<dbReference type="EC" id="3.4.21.-"/>
<dbReference type="EMBL" id="AL009126">
    <property type="protein sequence ID" value="CAB13610.1"/>
    <property type="molecule type" value="Genomic_DNA"/>
</dbReference>
<dbReference type="PIR" id="A69587">
    <property type="entry name" value="A69587"/>
</dbReference>
<dbReference type="RefSeq" id="NP_389608.1">
    <property type="nucleotide sequence ID" value="NC_000964.3"/>
</dbReference>
<dbReference type="RefSeq" id="WP_009967303.1">
    <property type="nucleotide sequence ID" value="NZ_OZ025638.1"/>
</dbReference>
<dbReference type="SMR" id="O31788"/>
<dbReference type="FunCoup" id="O31788">
    <property type="interactions" value="42"/>
</dbReference>
<dbReference type="STRING" id="224308.BSU17260"/>
<dbReference type="MEROPS" id="S08.137"/>
<dbReference type="PaxDb" id="224308-BSU17260"/>
<dbReference type="EnsemblBacteria" id="CAB13610">
    <property type="protein sequence ID" value="CAB13610"/>
    <property type="gene ID" value="BSU_17260"/>
</dbReference>
<dbReference type="GeneID" id="940056"/>
<dbReference type="KEGG" id="bsu:BSU17260"/>
<dbReference type="PATRIC" id="fig|224308.179.peg.1871"/>
<dbReference type="eggNOG" id="COG1404">
    <property type="taxonomic scope" value="Bacteria"/>
</dbReference>
<dbReference type="InParanoid" id="O31788"/>
<dbReference type="OrthoDB" id="9798386at2"/>
<dbReference type="PhylomeDB" id="O31788"/>
<dbReference type="BioCyc" id="BSUB:BSU17260-MONOMER"/>
<dbReference type="Proteomes" id="UP000001570">
    <property type="component" value="Chromosome"/>
</dbReference>
<dbReference type="GO" id="GO:0005737">
    <property type="term" value="C:cytoplasm"/>
    <property type="evidence" value="ECO:0007669"/>
    <property type="project" value="UniProtKB-SubCell"/>
</dbReference>
<dbReference type="GO" id="GO:0004252">
    <property type="term" value="F:serine-type endopeptidase activity"/>
    <property type="evidence" value="ECO:0000318"/>
    <property type="project" value="GO_Central"/>
</dbReference>
<dbReference type="GO" id="GO:0006508">
    <property type="term" value="P:proteolysis"/>
    <property type="evidence" value="ECO:0007669"/>
    <property type="project" value="UniProtKB-KW"/>
</dbReference>
<dbReference type="CDD" id="cd07487">
    <property type="entry name" value="Peptidases_S8_1"/>
    <property type="match status" value="1"/>
</dbReference>
<dbReference type="Gene3D" id="3.40.50.200">
    <property type="entry name" value="Peptidase S8/S53 domain"/>
    <property type="match status" value="1"/>
</dbReference>
<dbReference type="InterPro" id="IPR000209">
    <property type="entry name" value="Peptidase_S8/S53_dom"/>
</dbReference>
<dbReference type="InterPro" id="IPR036852">
    <property type="entry name" value="Peptidase_S8/S53_dom_sf"/>
</dbReference>
<dbReference type="InterPro" id="IPR023827">
    <property type="entry name" value="Peptidase_S8_Asp-AS"/>
</dbReference>
<dbReference type="InterPro" id="IPR022398">
    <property type="entry name" value="Peptidase_S8_His-AS"/>
</dbReference>
<dbReference type="InterPro" id="IPR023828">
    <property type="entry name" value="Peptidase_S8_Ser-AS"/>
</dbReference>
<dbReference type="InterPro" id="IPR050131">
    <property type="entry name" value="Peptidase_S8_subtilisin-like"/>
</dbReference>
<dbReference type="InterPro" id="IPR015500">
    <property type="entry name" value="Peptidase_S8_subtilisin-rel"/>
</dbReference>
<dbReference type="PANTHER" id="PTHR43806">
    <property type="entry name" value="PEPTIDASE S8"/>
    <property type="match status" value="1"/>
</dbReference>
<dbReference type="PANTHER" id="PTHR43806:SF65">
    <property type="entry name" value="SERINE PROTEASE APRX"/>
    <property type="match status" value="1"/>
</dbReference>
<dbReference type="Pfam" id="PF00082">
    <property type="entry name" value="Peptidase_S8"/>
    <property type="match status" value="1"/>
</dbReference>
<dbReference type="PRINTS" id="PR00723">
    <property type="entry name" value="SUBTILISIN"/>
</dbReference>
<dbReference type="SUPFAM" id="SSF52743">
    <property type="entry name" value="Subtilisin-like"/>
    <property type="match status" value="1"/>
</dbReference>
<dbReference type="PROSITE" id="PS51892">
    <property type="entry name" value="SUBTILASE"/>
    <property type="match status" value="1"/>
</dbReference>
<dbReference type="PROSITE" id="PS00136">
    <property type="entry name" value="SUBTILASE_ASP"/>
    <property type="match status" value="1"/>
</dbReference>
<dbReference type="PROSITE" id="PS00137">
    <property type="entry name" value="SUBTILASE_HIS"/>
    <property type="match status" value="1"/>
</dbReference>
<dbReference type="PROSITE" id="PS00138">
    <property type="entry name" value="SUBTILASE_SER"/>
    <property type="match status" value="1"/>
</dbReference>
<gene>
    <name type="primary">aprX</name>
    <name type="ordered locus">BSU17260</name>
</gene>
<comment type="function">
    <text evidence="4">Displays serine protease activity. Seems to have a broad substrate specificity.</text>
</comment>
<comment type="activity regulation">
    <text evidence="4">Is completely inhibited by phenylmethanesulphonylfluoride (PMSF) in vitro.</text>
</comment>
<comment type="subcellular location">
    <subcellularLocation>
        <location evidence="6">Cytoplasm</location>
    </subcellularLocation>
    <text>Is leaked to the culture medium during the late stationary phase owing to cell lysis.</text>
</comment>
<comment type="induction">
    <text evidence="3 4">Is expressed during the late stationary phase of growth. Is down-regulated by SinR.</text>
</comment>
<comment type="disruption phenotype">
    <text evidence="3">Cells lacking this gene show normal growth and sporulation.</text>
</comment>
<comment type="similarity">
    <text evidence="5">Belongs to the peptidase S8 family.</text>
</comment>
<feature type="chain" id="PRO_0000390778" description="Serine protease AprX">
    <location>
        <begin position="1"/>
        <end position="442"/>
    </location>
</feature>
<feature type="domain" description="Peptidase S8" evidence="1">
    <location>
        <begin position="122"/>
        <end position="439"/>
    </location>
</feature>
<feature type="region of interest" description="Disordered" evidence="2">
    <location>
        <begin position="318"/>
        <end position="337"/>
    </location>
</feature>
<feature type="region of interest" description="Disordered" evidence="2">
    <location>
        <begin position="423"/>
        <end position="442"/>
    </location>
</feature>
<feature type="active site" description="Charge relay system" evidence="1">
    <location>
        <position position="155"/>
    </location>
</feature>
<feature type="active site" description="Charge relay system" evidence="1">
    <location>
        <position position="187"/>
    </location>
</feature>
<feature type="active site" description="Charge relay system" evidence="1">
    <location>
        <position position="384"/>
    </location>
</feature>
<sequence>MFGYSMVQMVRANAHKLDWPLRETVLQLYKPFKWTPCFLHKFFETKLQNRKKMSVIIEFEEGCHETGFQMAGEVLQKEKRSKLKSRFNKINCCSAEVTPSALHSLLSECSNIRKVYLNREVKALLDTATEASHAKEVVRNGQTLTGKGVTVAVVDTGIYPHPDLEGRIIGFADMVNQKTEPYDDNGHGTHCAGDVASSGASSSGQYRGPAPEANLIGVKVLNKQGSGTLADIIEGVEWCIQYNEDNPDEPIDIMSMSLGGDALRYDHEQEDPLVRAVEEAWSAGIVVCVAAGNSGPDSQTIASPGVSEKVITVGALDDNNTASSDDDTVASFSSRGPTVYGKEKPDILAPGVNIISLRSPNSYIDKLQKSSRVGSQYFTMSGTSMATPICAGIAALILQQNPDLTPDEVKELLKNGTDKWKDEDPNIYGAGAVNAENSVPGQ</sequence>